<evidence type="ECO:0000255" key="1">
    <source>
        <dbReference type="HAMAP-Rule" id="MF_00394"/>
    </source>
</evidence>
<feature type="chain" id="PRO_0000255274" description="Glycerol-3-phosphate dehydrogenase [NAD(P)+]">
    <location>
        <begin position="1"/>
        <end position="357"/>
    </location>
</feature>
<feature type="active site" description="Proton acceptor" evidence="1">
    <location>
        <position position="207"/>
    </location>
</feature>
<feature type="binding site" evidence="1">
    <location>
        <position position="30"/>
    </location>
    <ligand>
        <name>NADPH</name>
        <dbReference type="ChEBI" id="CHEBI:57783"/>
    </ligand>
</feature>
<feature type="binding site" evidence="1">
    <location>
        <position position="31"/>
    </location>
    <ligand>
        <name>NADPH</name>
        <dbReference type="ChEBI" id="CHEBI:57783"/>
    </ligand>
</feature>
<feature type="binding site" evidence="1">
    <location>
        <position position="51"/>
    </location>
    <ligand>
        <name>NADPH</name>
        <dbReference type="ChEBI" id="CHEBI:57783"/>
    </ligand>
</feature>
<feature type="binding site" evidence="1">
    <location>
        <position position="124"/>
    </location>
    <ligand>
        <name>NADPH</name>
        <dbReference type="ChEBI" id="CHEBI:57783"/>
    </ligand>
</feature>
<feature type="binding site" evidence="1">
    <location>
        <position position="124"/>
    </location>
    <ligand>
        <name>sn-glycerol 3-phosphate</name>
        <dbReference type="ChEBI" id="CHEBI:57597"/>
    </ligand>
</feature>
<feature type="binding site" evidence="1">
    <location>
        <position position="152"/>
    </location>
    <ligand>
        <name>sn-glycerol 3-phosphate</name>
        <dbReference type="ChEBI" id="CHEBI:57597"/>
    </ligand>
</feature>
<feature type="binding site" evidence="1">
    <location>
        <position position="156"/>
    </location>
    <ligand>
        <name>NADPH</name>
        <dbReference type="ChEBI" id="CHEBI:57783"/>
    </ligand>
</feature>
<feature type="binding site" evidence="1">
    <location>
        <position position="207"/>
    </location>
    <ligand>
        <name>sn-glycerol 3-phosphate</name>
        <dbReference type="ChEBI" id="CHEBI:57597"/>
    </ligand>
</feature>
<feature type="binding site" evidence="1">
    <location>
        <position position="260"/>
    </location>
    <ligand>
        <name>sn-glycerol 3-phosphate</name>
        <dbReference type="ChEBI" id="CHEBI:57597"/>
    </ligand>
</feature>
<feature type="binding site" evidence="1">
    <location>
        <position position="270"/>
    </location>
    <ligand>
        <name>sn-glycerol 3-phosphate</name>
        <dbReference type="ChEBI" id="CHEBI:57597"/>
    </ligand>
</feature>
<feature type="binding site" evidence="1">
    <location>
        <position position="271"/>
    </location>
    <ligand>
        <name>NADPH</name>
        <dbReference type="ChEBI" id="CHEBI:57783"/>
    </ligand>
</feature>
<feature type="binding site" evidence="1">
    <location>
        <position position="271"/>
    </location>
    <ligand>
        <name>sn-glycerol 3-phosphate</name>
        <dbReference type="ChEBI" id="CHEBI:57597"/>
    </ligand>
</feature>
<feature type="binding site" evidence="1">
    <location>
        <position position="272"/>
    </location>
    <ligand>
        <name>sn-glycerol 3-phosphate</name>
        <dbReference type="ChEBI" id="CHEBI:57597"/>
    </ligand>
</feature>
<feature type="binding site" evidence="1">
    <location>
        <position position="297"/>
    </location>
    <ligand>
        <name>NADPH</name>
        <dbReference type="ChEBI" id="CHEBI:57783"/>
    </ligand>
</feature>
<comment type="function">
    <text evidence="1">Catalyzes the reduction of the glycolytic intermediate dihydroxyacetone phosphate (DHAP) to sn-glycerol 3-phosphate (G3P), the key precursor for phospholipid synthesis.</text>
</comment>
<comment type="catalytic activity">
    <reaction evidence="1">
        <text>sn-glycerol 3-phosphate + NAD(+) = dihydroxyacetone phosphate + NADH + H(+)</text>
        <dbReference type="Rhea" id="RHEA:11092"/>
        <dbReference type="ChEBI" id="CHEBI:15378"/>
        <dbReference type="ChEBI" id="CHEBI:57540"/>
        <dbReference type="ChEBI" id="CHEBI:57597"/>
        <dbReference type="ChEBI" id="CHEBI:57642"/>
        <dbReference type="ChEBI" id="CHEBI:57945"/>
        <dbReference type="EC" id="1.1.1.94"/>
    </reaction>
    <physiologicalReaction direction="right-to-left" evidence="1">
        <dbReference type="Rhea" id="RHEA:11094"/>
    </physiologicalReaction>
</comment>
<comment type="catalytic activity">
    <reaction evidence="1">
        <text>sn-glycerol 3-phosphate + NADP(+) = dihydroxyacetone phosphate + NADPH + H(+)</text>
        <dbReference type="Rhea" id="RHEA:11096"/>
        <dbReference type="ChEBI" id="CHEBI:15378"/>
        <dbReference type="ChEBI" id="CHEBI:57597"/>
        <dbReference type="ChEBI" id="CHEBI:57642"/>
        <dbReference type="ChEBI" id="CHEBI:57783"/>
        <dbReference type="ChEBI" id="CHEBI:58349"/>
        <dbReference type="EC" id="1.1.1.94"/>
    </reaction>
    <physiologicalReaction direction="right-to-left" evidence="1">
        <dbReference type="Rhea" id="RHEA:11098"/>
    </physiologicalReaction>
</comment>
<comment type="pathway">
    <text evidence="1">Membrane lipid metabolism; glycerophospholipid metabolism.</text>
</comment>
<comment type="subcellular location">
    <subcellularLocation>
        <location evidence="1">Cytoplasm</location>
    </subcellularLocation>
</comment>
<comment type="similarity">
    <text evidence="1">Belongs to the NAD-dependent glycerol-3-phosphate dehydrogenase family.</text>
</comment>
<name>GPDA_ACIAD</name>
<gene>
    <name evidence="1" type="primary">gpsA</name>
    <name type="ordered locus">ACIAD1317</name>
</gene>
<accession>Q3V7H1</accession>
<dbReference type="EC" id="1.1.1.94" evidence="1"/>
<dbReference type="EMBL" id="CR543861">
    <property type="protein sequence ID" value="CAG68187.1"/>
    <property type="molecule type" value="Genomic_DNA"/>
</dbReference>
<dbReference type="RefSeq" id="WP_011182259.1">
    <property type="nucleotide sequence ID" value="NC_005966.1"/>
</dbReference>
<dbReference type="SMR" id="Q3V7H1"/>
<dbReference type="STRING" id="202950.GCA_001485005_01074"/>
<dbReference type="GeneID" id="45233732"/>
<dbReference type="KEGG" id="aci:ACIAD1317"/>
<dbReference type="eggNOG" id="COG0240">
    <property type="taxonomic scope" value="Bacteria"/>
</dbReference>
<dbReference type="HOGENOM" id="CLU_033449_0_2_6"/>
<dbReference type="OrthoDB" id="9812273at2"/>
<dbReference type="BioCyc" id="ASP62977:ACIAD_RS06050-MONOMER"/>
<dbReference type="UniPathway" id="UPA00940"/>
<dbReference type="Proteomes" id="UP000000430">
    <property type="component" value="Chromosome"/>
</dbReference>
<dbReference type="GO" id="GO:0005829">
    <property type="term" value="C:cytosol"/>
    <property type="evidence" value="ECO:0007669"/>
    <property type="project" value="TreeGrafter"/>
</dbReference>
<dbReference type="GO" id="GO:0047952">
    <property type="term" value="F:glycerol-3-phosphate dehydrogenase [NAD(P)+] activity"/>
    <property type="evidence" value="ECO:0007669"/>
    <property type="project" value="UniProtKB-UniRule"/>
</dbReference>
<dbReference type="GO" id="GO:0051287">
    <property type="term" value="F:NAD binding"/>
    <property type="evidence" value="ECO:0007669"/>
    <property type="project" value="InterPro"/>
</dbReference>
<dbReference type="GO" id="GO:0005975">
    <property type="term" value="P:carbohydrate metabolic process"/>
    <property type="evidence" value="ECO:0007669"/>
    <property type="project" value="InterPro"/>
</dbReference>
<dbReference type="GO" id="GO:0046167">
    <property type="term" value="P:glycerol-3-phosphate biosynthetic process"/>
    <property type="evidence" value="ECO:0007669"/>
    <property type="project" value="UniProtKB-UniRule"/>
</dbReference>
<dbReference type="GO" id="GO:0046168">
    <property type="term" value="P:glycerol-3-phosphate catabolic process"/>
    <property type="evidence" value="ECO:0007669"/>
    <property type="project" value="InterPro"/>
</dbReference>
<dbReference type="GO" id="GO:0046474">
    <property type="term" value="P:glycerophospholipid biosynthetic process"/>
    <property type="evidence" value="ECO:0007669"/>
    <property type="project" value="TreeGrafter"/>
</dbReference>
<dbReference type="FunFam" id="1.10.1040.10:FF:000001">
    <property type="entry name" value="Glycerol-3-phosphate dehydrogenase [NAD(P)+]"/>
    <property type="match status" value="1"/>
</dbReference>
<dbReference type="FunFam" id="3.40.50.720:FF:000019">
    <property type="entry name" value="Glycerol-3-phosphate dehydrogenase [NAD(P)+]"/>
    <property type="match status" value="1"/>
</dbReference>
<dbReference type="Gene3D" id="1.10.1040.10">
    <property type="entry name" value="N-(1-d-carboxylethyl)-l-norvaline Dehydrogenase, domain 2"/>
    <property type="match status" value="1"/>
</dbReference>
<dbReference type="Gene3D" id="3.40.50.720">
    <property type="entry name" value="NAD(P)-binding Rossmann-like Domain"/>
    <property type="match status" value="1"/>
</dbReference>
<dbReference type="HAMAP" id="MF_00394">
    <property type="entry name" value="NAD_Glyc3P_dehydrog"/>
    <property type="match status" value="1"/>
</dbReference>
<dbReference type="InterPro" id="IPR008927">
    <property type="entry name" value="6-PGluconate_DH-like_C_sf"/>
</dbReference>
<dbReference type="InterPro" id="IPR013328">
    <property type="entry name" value="6PGD_dom2"/>
</dbReference>
<dbReference type="InterPro" id="IPR006168">
    <property type="entry name" value="G3P_DH_NAD-dep"/>
</dbReference>
<dbReference type="InterPro" id="IPR006109">
    <property type="entry name" value="G3P_DH_NAD-dep_C"/>
</dbReference>
<dbReference type="InterPro" id="IPR011128">
    <property type="entry name" value="G3P_DH_NAD-dep_N"/>
</dbReference>
<dbReference type="InterPro" id="IPR036291">
    <property type="entry name" value="NAD(P)-bd_dom_sf"/>
</dbReference>
<dbReference type="NCBIfam" id="NF000940">
    <property type="entry name" value="PRK00094.1-2"/>
    <property type="match status" value="1"/>
</dbReference>
<dbReference type="NCBIfam" id="NF000942">
    <property type="entry name" value="PRK00094.1-4"/>
    <property type="match status" value="1"/>
</dbReference>
<dbReference type="NCBIfam" id="NF000944">
    <property type="entry name" value="PRK00094.2-2"/>
    <property type="match status" value="1"/>
</dbReference>
<dbReference type="NCBIfam" id="NF000946">
    <property type="entry name" value="PRK00094.2-4"/>
    <property type="match status" value="1"/>
</dbReference>
<dbReference type="PANTHER" id="PTHR11728">
    <property type="entry name" value="GLYCEROL-3-PHOSPHATE DEHYDROGENASE"/>
    <property type="match status" value="1"/>
</dbReference>
<dbReference type="PANTHER" id="PTHR11728:SF1">
    <property type="entry name" value="GLYCEROL-3-PHOSPHATE DEHYDROGENASE [NAD(+)] 2, CHLOROPLASTIC"/>
    <property type="match status" value="1"/>
</dbReference>
<dbReference type="Pfam" id="PF07479">
    <property type="entry name" value="NAD_Gly3P_dh_C"/>
    <property type="match status" value="1"/>
</dbReference>
<dbReference type="Pfam" id="PF01210">
    <property type="entry name" value="NAD_Gly3P_dh_N"/>
    <property type="match status" value="1"/>
</dbReference>
<dbReference type="PIRSF" id="PIRSF000114">
    <property type="entry name" value="Glycerol-3-P_dh"/>
    <property type="match status" value="1"/>
</dbReference>
<dbReference type="PRINTS" id="PR00077">
    <property type="entry name" value="GPDHDRGNASE"/>
</dbReference>
<dbReference type="SUPFAM" id="SSF48179">
    <property type="entry name" value="6-phosphogluconate dehydrogenase C-terminal domain-like"/>
    <property type="match status" value="1"/>
</dbReference>
<dbReference type="SUPFAM" id="SSF51735">
    <property type="entry name" value="NAD(P)-binding Rossmann-fold domains"/>
    <property type="match status" value="1"/>
</dbReference>
<dbReference type="PROSITE" id="PS00957">
    <property type="entry name" value="NAD_G3PDH"/>
    <property type="match status" value="1"/>
</dbReference>
<keyword id="KW-0963">Cytoplasm</keyword>
<keyword id="KW-0444">Lipid biosynthesis</keyword>
<keyword id="KW-0443">Lipid metabolism</keyword>
<keyword id="KW-0520">NAD</keyword>
<keyword id="KW-0521">NADP</keyword>
<keyword id="KW-0547">Nucleotide-binding</keyword>
<keyword id="KW-0560">Oxidoreductase</keyword>
<keyword id="KW-0594">Phospholipid biosynthesis</keyword>
<keyword id="KW-1208">Phospholipid metabolism</keyword>
<proteinExistence type="inferred from homology"/>
<protein>
    <recommendedName>
        <fullName evidence="1">Glycerol-3-phosphate dehydrogenase [NAD(P)+]</fullName>
        <ecNumber evidence="1">1.1.1.94</ecNumber>
    </recommendedName>
    <alternativeName>
        <fullName evidence="1">NAD(P)(+)-dependent glycerol-3-phosphate dehydrogenase</fullName>
    </alternativeName>
    <alternativeName>
        <fullName evidence="1">NAD(P)H-dependent dihydroxyacetone-phosphate reductase</fullName>
    </alternativeName>
</protein>
<organism>
    <name type="scientific">Acinetobacter baylyi (strain ATCC 33305 / BD413 / ADP1)</name>
    <dbReference type="NCBI Taxonomy" id="62977"/>
    <lineage>
        <taxon>Bacteria</taxon>
        <taxon>Pseudomonadati</taxon>
        <taxon>Pseudomonadota</taxon>
        <taxon>Gammaproteobacteria</taxon>
        <taxon>Moraxellales</taxon>
        <taxon>Moraxellaceae</taxon>
        <taxon>Acinetobacter</taxon>
    </lineage>
</organism>
<reference key="1">
    <citation type="journal article" date="2004" name="Nucleic Acids Res.">
        <title>Unique features revealed by the genome sequence of Acinetobacter sp. ADP1, a versatile and naturally transformation competent bacterium.</title>
        <authorList>
            <person name="Barbe V."/>
            <person name="Vallenet D."/>
            <person name="Fonknechten N."/>
            <person name="Kreimeyer A."/>
            <person name="Oztas S."/>
            <person name="Labarre L."/>
            <person name="Cruveiller S."/>
            <person name="Robert C."/>
            <person name="Duprat S."/>
            <person name="Wincker P."/>
            <person name="Ornston L.N."/>
            <person name="Weissenbach J."/>
            <person name="Marliere P."/>
            <person name="Cohen G.N."/>
            <person name="Medigue C."/>
        </authorList>
    </citation>
    <scope>NUCLEOTIDE SEQUENCE [LARGE SCALE GENOMIC DNA]</scope>
    <source>
        <strain>ATCC 33305 / BD413 / ADP1</strain>
    </source>
</reference>
<sequence>MTDLKFTDLVEPVVIDKKTALRVTVLGGGSFGTAMANLATRNGCNTMIWIRDQKMADEINQTHFNQRYLPDFNLEPELKAVSDLELAVRDRDIIFVAIPSHSFREVVKQISPYITAQAIVSLTKGIEANTFSFMSDIIREELPEVPYGVLSGPNLAKEIVAGMPSGTVIASDSELVRYAVQHALHSALFRVFGSDDVHGVELGGALKNIYAIAMGMAAAYNIGENTKSMIITRALAEMSRFAVKLGANPLTFLGLSGVGDLFATCNSPLSRNYQIGYALGSGKTLDQAIKALGQTAEGINTIVQVRTRAIELDVYMPITNALYEVIFEGAPPLNIALALMKNGHRSDVEFVLPHHQV</sequence>